<dbReference type="EC" id="5.3.1.5" evidence="1"/>
<dbReference type="EMBL" id="CP000086">
    <property type="protein sequence ID" value="ABC39030.1"/>
    <property type="status" value="ALT_INIT"/>
    <property type="molecule type" value="Genomic_DNA"/>
</dbReference>
<dbReference type="RefSeq" id="WP_009891030.1">
    <property type="nucleotide sequence ID" value="NZ_CP008785.1"/>
</dbReference>
<dbReference type="SMR" id="Q2SW40"/>
<dbReference type="GeneID" id="45122056"/>
<dbReference type="KEGG" id="bte:BTH_I2338"/>
<dbReference type="HOGENOM" id="CLU_037261_1_0_4"/>
<dbReference type="Proteomes" id="UP000001930">
    <property type="component" value="Chromosome I"/>
</dbReference>
<dbReference type="GO" id="GO:0005737">
    <property type="term" value="C:cytoplasm"/>
    <property type="evidence" value="ECO:0007669"/>
    <property type="project" value="UniProtKB-SubCell"/>
</dbReference>
<dbReference type="GO" id="GO:0000287">
    <property type="term" value="F:magnesium ion binding"/>
    <property type="evidence" value="ECO:0007669"/>
    <property type="project" value="UniProtKB-UniRule"/>
</dbReference>
<dbReference type="GO" id="GO:0009045">
    <property type="term" value="F:xylose isomerase activity"/>
    <property type="evidence" value="ECO:0007669"/>
    <property type="project" value="UniProtKB-UniRule"/>
</dbReference>
<dbReference type="GO" id="GO:0042732">
    <property type="term" value="P:D-xylose metabolic process"/>
    <property type="evidence" value="ECO:0007669"/>
    <property type="project" value="UniProtKB-UniRule"/>
</dbReference>
<dbReference type="FunFam" id="3.20.20.150:FF:000002">
    <property type="entry name" value="Xylose isomerase"/>
    <property type="match status" value="1"/>
</dbReference>
<dbReference type="Gene3D" id="3.20.20.150">
    <property type="entry name" value="Divalent-metal-dependent TIM barrel enzymes"/>
    <property type="match status" value="1"/>
</dbReference>
<dbReference type="HAMAP" id="MF_00455">
    <property type="entry name" value="Xylose_isom_A"/>
    <property type="match status" value="1"/>
</dbReference>
<dbReference type="InterPro" id="IPR036237">
    <property type="entry name" value="Xyl_isomerase-like_sf"/>
</dbReference>
<dbReference type="InterPro" id="IPR013452">
    <property type="entry name" value="Xylose_isom_bac"/>
</dbReference>
<dbReference type="InterPro" id="IPR001998">
    <property type="entry name" value="Xylose_isomerase"/>
</dbReference>
<dbReference type="NCBIfam" id="NF003998">
    <property type="entry name" value="PRK05474.1"/>
    <property type="match status" value="1"/>
</dbReference>
<dbReference type="NCBIfam" id="TIGR02630">
    <property type="entry name" value="xylose_isom_A"/>
    <property type="match status" value="1"/>
</dbReference>
<dbReference type="PANTHER" id="PTHR48408">
    <property type="match status" value="1"/>
</dbReference>
<dbReference type="PANTHER" id="PTHR48408:SF1">
    <property type="entry name" value="XYLOSE ISOMERASE"/>
    <property type="match status" value="1"/>
</dbReference>
<dbReference type="PRINTS" id="PR00688">
    <property type="entry name" value="XYLOSISMRASE"/>
</dbReference>
<dbReference type="SUPFAM" id="SSF51658">
    <property type="entry name" value="Xylose isomerase-like"/>
    <property type="match status" value="1"/>
</dbReference>
<dbReference type="PROSITE" id="PS51415">
    <property type="entry name" value="XYLOSE_ISOMERASE"/>
    <property type="match status" value="1"/>
</dbReference>
<reference key="1">
    <citation type="journal article" date="2005" name="BMC Genomics">
        <title>Bacterial genome adaptation to niches: divergence of the potential virulence genes in three Burkholderia species of different survival strategies.</title>
        <authorList>
            <person name="Kim H.S."/>
            <person name="Schell M.A."/>
            <person name="Yu Y."/>
            <person name="Ulrich R.L."/>
            <person name="Sarria S.H."/>
            <person name="Nierman W.C."/>
            <person name="DeShazer D."/>
        </authorList>
    </citation>
    <scope>NUCLEOTIDE SEQUENCE [LARGE SCALE GENOMIC DNA]</scope>
    <source>
        <strain>ATCC 700388 / DSM 13276 / CCUG 48851 / CIP 106301 / E264</strain>
    </source>
</reference>
<sequence>MSYFEHIPAIRYEGPQSDNPLAYRHYDRTKRVLGKTLEEHLRIAVCYWHTFVWPGQDVFGQGALRRPWQQPGEPLERARQKADAAFAFFTKLGTPFYTFHDTDVAPEGANLHEYVENFARMVDYLGEHQQASGVRLLWGTANLFSHPRFAAGAATSPNPDAFAWAATQVCHALDATHRLGGENYVLWGGREGYETLLNTDLAREREQLARFLAMVVEHKHRIGFTGALLIEPKPQEPTKHQYDYDVATVHGLLTQYGLQNEIRVNIEANHATLAGHSFHHEIANAFALGVFGSVDANRGDPQNGWDTDQFPNSVEELTLAFYEILRHGGFTTGGMNFDAKVRRQSVDPEDLFHGHIGAIDVLALALERAAVLVENDRLDALRRRRYAQWDSEFGRKILAGGYSLQSLAADALARGVNPQHASGAQERLENIVNQAIYALR</sequence>
<protein>
    <recommendedName>
        <fullName evidence="1">Xylose isomerase</fullName>
        <ecNumber evidence="1">5.3.1.5</ecNumber>
    </recommendedName>
</protein>
<organism>
    <name type="scientific">Burkholderia thailandensis (strain ATCC 700388 / DSM 13276 / CCUG 48851 / CIP 106301 / E264)</name>
    <dbReference type="NCBI Taxonomy" id="271848"/>
    <lineage>
        <taxon>Bacteria</taxon>
        <taxon>Pseudomonadati</taxon>
        <taxon>Pseudomonadota</taxon>
        <taxon>Betaproteobacteria</taxon>
        <taxon>Burkholderiales</taxon>
        <taxon>Burkholderiaceae</taxon>
        <taxon>Burkholderia</taxon>
        <taxon>pseudomallei group</taxon>
    </lineage>
</organism>
<comment type="catalytic activity">
    <reaction evidence="1">
        <text>alpha-D-xylose = alpha-D-xylulofuranose</text>
        <dbReference type="Rhea" id="RHEA:22816"/>
        <dbReference type="ChEBI" id="CHEBI:28518"/>
        <dbReference type="ChEBI" id="CHEBI:188998"/>
        <dbReference type="EC" id="5.3.1.5"/>
    </reaction>
</comment>
<comment type="cofactor">
    <cofactor evidence="1">
        <name>Mg(2+)</name>
        <dbReference type="ChEBI" id="CHEBI:18420"/>
    </cofactor>
    <text evidence="1">Binds 2 magnesium ions per subunit.</text>
</comment>
<comment type="subunit">
    <text evidence="1">Homotetramer.</text>
</comment>
<comment type="subcellular location">
    <subcellularLocation>
        <location evidence="1">Cytoplasm</location>
    </subcellularLocation>
</comment>
<comment type="similarity">
    <text evidence="1">Belongs to the xylose isomerase family.</text>
</comment>
<comment type="sequence caution" evidence="2">
    <conflict type="erroneous initiation">
        <sequence resource="EMBL-CDS" id="ABC39030"/>
    </conflict>
</comment>
<name>XYLA_BURTA</name>
<accession>Q2SW40</accession>
<keyword id="KW-0119">Carbohydrate metabolism</keyword>
<keyword id="KW-0963">Cytoplasm</keyword>
<keyword id="KW-0413">Isomerase</keyword>
<keyword id="KW-0460">Magnesium</keyword>
<keyword id="KW-0479">Metal-binding</keyword>
<keyword id="KW-0859">Xylose metabolism</keyword>
<evidence type="ECO:0000255" key="1">
    <source>
        <dbReference type="HAMAP-Rule" id="MF_00455"/>
    </source>
</evidence>
<evidence type="ECO:0000305" key="2"/>
<proteinExistence type="inferred from homology"/>
<gene>
    <name evidence="1" type="primary">xylA</name>
    <name type="ordered locus">BTH_I2338</name>
</gene>
<feature type="chain" id="PRO_0000236960" description="Xylose isomerase">
    <location>
        <begin position="1"/>
        <end position="440"/>
    </location>
</feature>
<feature type="active site" evidence="1">
    <location>
        <position position="100"/>
    </location>
</feature>
<feature type="active site" evidence="1">
    <location>
        <position position="103"/>
    </location>
</feature>
<feature type="binding site" evidence="1">
    <location>
        <position position="231"/>
    </location>
    <ligand>
        <name>Mg(2+)</name>
        <dbReference type="ChEBI" id="CHEBI:18420"/>
        <label>1</label>
    </ligand>
</feature>
<feature type="binding site" evidence="1">
    <location>
        <position position="267"/>
    </location>
    <ligand>
        <name>Mg(2+)</name>
        <dbReference type="ChEBI" id="CHEBI:18420"/>
        <label>1</label>
    </ligand>
</feature>
<feature type="binding site" evidence="1">
    <location>
        <position position="267"/>
    </location>
    <ligand>
        <name>Mg(2+)</name>
        <dbReference type="ChEBI" id="CHEBI:18420"/>
        <label>2</label>
    </ligand>
</feature>
<feature type="binding site" evidence="1">
    <location>
        <position position="270"/>
    </location>
    <ligand>
        <name>Mg(2+)</name>
        <dbReference type="ChEBI" id="CHEBI:18420"/>
        <label>2</label>
    </ligand>
</feature>
<feature type="binding site" evidence="1">
    <location>
        <position position="295"/>
    </location>
    <ligand>
        <name>Mg(2+)</name>
        <dbReference type="ChEBI" id="CHEBI:18420"/>
        <label>1</label>
    </ligand>
</feature>
<feature type="binding site" evidence="1">
    <location>
        <position position="306"/>
    </location>
    <ligand>
        <name>Mg(2+)</name>
        <dbReference type="ChEBI" id="CHEBI:18420"/>
        <label>2</label>
    </ligand>
</feature>
<feature type="binding site" evidence="1">
    <location>
        <position position="308"/>
    </location>
    <ligand>
        <name>Mg(2+)</name>
        <dbReference type="ChEBI" id="CHEBI:18420"/>
        <label>2</label>
    </ligand>
</feature>
<feature type="binding site" evidence="1">
    <location>
        <position position="338"/>
    </location>
    <ligand>
        <name>Mg(2+)</name>
        <dbReference type="ChEBI" id="CHEBI:18420"/>
        <label>1</label>
    </ligand>
</feature>